<feature type="chain" id="PRO_0000094987" description="UPF0291 protein SA1176">
    <location>
        <begin position="1"/>
        <end position="79"/>
    </location>
</feature>
<feature type="region of interest" description="Disordered" evidence="2">
    <location>
        <begin position="56"/>
        <end position="79"/>
    </location>
</feature>
<feature type="compositionally biased region" description="Basic and acidic residues" evidence="2">
    <location>
        <begin position="64"/>
        <end position="79"/>
    </location>
</feature>
<dbReference type="EMBL" id="BA000018">
    <property type="protein sequence ID" value="BAB42434.1"/>
    <property type="molecule type" value="Genomic_DNA"/>
</dbReference>
<dbReference type="PIR" id="F89909">
    <property type="entry name" value="F89909"/>
</dbReference>
<dbReference type="RefSeq" id="WP_000071351.1">
    <property type="nucleotide sequence ID" value="NC_002745.2"/>
</dbReference>
<dbReference type="SMR" id="P60076"/>
<dbReference type="EnsemblBacteria" id="BAB42434">
    <property type="protein sequence ID" value="BAB42434"/>
    <property type="gene ID" value="BAB42434"/>
</dbReference>
<dbReference type="KEGG" id="sau:SA1176"/>
<dbReference type="HOGENOM" id="CLU_173137_0_2_9"/>
<dbReference type="GO" id="GO:0005737">
    <property type="term" value="C:cytoplasm"/>
    <property type="evidence" value="ECO:0007669"/>
    <property type="project" value="UniProtKB-SubCell"/>
</dbReference>
<dbReference type="Gene3D" id="1.10.287.540">
    <property type="entry name" value="Helix hairpin bin"/>
    <property type="match status" value="1"/>
</dbReference>
<dbReference type="HAMAP" id="MF_01103">
    <property type="entry name" value="UPF0291"/>
    <property type="match status" value="1"/>
</dbReference>
<dbReference type="InterPro" id="IPR009242">
    <property type="entry name" value="DUF896"/>
</dbReference>
<dbReference type="PANTHER" id="PTHR37300">
    <property type="entry name" value="UPF0291 PROTEIN CBO2609/CLC_2481"/>
    <property type="match status" value="1"/>
</dbReference>
<dbReference type="PANTHER" id="PTHR37300:SF1">
    <property type="entry name" value="UPF0291 PROTEIN YNZC"/>
    <property type="match status" value="1"/>
</dbReference>
<dbReference type="Pfam" id="PF05979">
    <property type="entry name" value="DUF896"/>
    <property type="match status" value="1"/>
</dbReference>
<dbReference type="SUPFAM" id="SSF158221">
    <property type="entry name" value="YnzC-like"/>
    <property type="match status" value="1"/>
</dbReference>
<evidence type="ECO:0000255" key="1">
    <source>
        <dbReference type="HAMAP-Rule" id="MF_01103"/>
    </source>
</evidence>
<evidence type="ECO:0000256" key="2">
    <source>
        <dbReference type="SAM" id="MobiDB-lite"/>
    </source>
</evidence>
<accession>P60076</accession>
<accession>Q99UD5</accession>
<gene>
    <name type="ordered locus">SA1176</name>
</gene>
<keyword id="KW-0963">Cytoplasm</keyword>
<name>Y1176_STAAN</name>
<protein>
    <recommendedName>
        <fullName evidence="1">UPF0291 protein SA1176</fullName>
    </recommendedName>
</protein>
<comment type="subcellular location">
    <subcellularLocation>
        <location evidence="1">Cytoplasm</location>
    </subcellularLocation>
</comment>
<comment type="similarity">
    <text evidence="1">Belongs to the UPF0291 family.</text>
</comment>
<reference key="1">
    <citation type="journal article" date="2001" name="Lancet">
        <title>Whole genome sequencing of meticillin-resistant Staphylococcus aureus.</title>
        <authorList>
            <person name="Kuroda M."/>
            <person name="Ohta T."/>
            <person name="Uchiyama I."/>
            <person name="Baba T."/>
            <person name="Yuzawa H."/>
            <person name="Kobayashi I."/>
            <person name="Cui L."/>
            <person name="Oguchi A."/>
            <person name="Aoki K."/>
            <person name="Nagai Y."/>
            <person name="Lian J.-Q."/>
            <person name="Ito T."/>
            <person name="Kanamori M."/>
            <person name="Matsumaru H."/>
            <person name="Maruyama A."/>
            <person name="Murakami H."/>
            <person name="Hosoyama A."/>
            <person name="Mizutani-Ui Y."/>
            <person name="Takahashi N.K."/>
            <person name="Sawano T."/>
            <person name="Inoue R."/>
            <person name="Kaito C."/>
            <person name="Sekimizu K."/>
            <person name="Hirakawa H."/>
            <person name="Kuhara S."/>
            <person name="Goto S."/>
            <person name="Yabuzaki J."/>
            <person name="Kanehisa M."/>
            <person name="Yamashita A."/>
            <person name="Oshima K."/>
            <person name="Furuya K."/>
            <person name="Yoshino C."/>
            <person name="Shiba T."/>
            <person name="Hattori M."/>
            <person name="Ogasawara N."/>
            <person name="Hayashi H."/>
            <person name="Hiramatsu K."/>
        </authorList>
    </citation>
    <scope>NUCLEOTIDE SEQUENCE [LARGE SCALE GENOMIC DNA]</scope>
    <source>
        <strain>N315</strain>
    </source>
</reference>
<reference key="2">
    <citation type="submission" date="2007-10" db="UniProtKB">
        <title>Shotgun proteomic analysis of total and membrane protein extracts of S. aureus strain N315.</title>
        <authorList>
            <person name="Vaezzadeh A.R."/>
            <person name="Deshusses J."/>
            <person name="Lescuyer P."/>
            <person name="Hochstrasser D.F."/>
        </authorList>
    </citation>
    <scope>IDENTIFICATION BY MASS SPECTROMETRY [LARGE SCALE ANALYSIS]</scope>
    <source>
        <strain>N315</strain>
    </source>
</reference>
<proteinExistence type="evidence at protein level"/>
<organism>
    <name type="scientific">Staphylococcus aureus (strain N315)</name>
    <dbReference type="NCBI Taxonomy" id="158879"/>
    <lineage>
        <taxon>Bacteria</taxon>
        <taxon>Bacillati</taxon>
        <taxon>Bacillota</taxon>
        <taxon>Bacilli</taxon>
        <taxon>Bacillales</taxon>
        <taxon>Staphylococcaceae</taxon>
        <taxon>Staphylococcus</taxon>
    </lineage>
</organism>
<sequence length="79" mass="9203">MSNSDLNIERINELAKKKKEVGLTQEEAKEQTALRKAYLESFRKGFKQQIENTKVIDPEGNDVTPEKIKEIQQKRDNKN</sequence>